<feature type="chain" id="PRO_0000165332" description="Uncharacterized 26.0 kDa protein in rep-hol intergenic region">
    <location>
        <begin position="1"/>
        <end position="227"/>
    </location>
</feature>
<accession>P51724</accession>
<sequence>MNIRMGIDKEDLKKFLKDLEIISLPDKKKREILIRSLQMIKRQAVKSAANQRNPMGGSWKKRKNGTAKMLRRIAKLANSKAEKAQGTLFYKQKRTGEIAQEHQEGIPHLFKKTEFTGKNKGGIGADPCTLRQAKKLKDLGYTVANGKTKNGKAKRRKPTLSEIRSTLSRAKASLIIRKLEEKNGMNPSRHLTQWIIPTEKRSFLDTREEENAKIILAEIQKYTQKQQ</sequence>
<reference key="1">
    <citation type="journal article" date="1984" name="Gene">
        <title>Nucleotide sequence of cloned DNA segments of the Haemophilus influenzae bacteriophage HP1c1.</title>
        <authorList>
            <person name="Benjamin R.C."/>
            <person name="Fitzmaurice W.P."/>
            <person name="Huang P.C."/>
            <person name="Scocca J.J."/>
        </authorList>
    </citation>
    <scope>NUCLEOTIDE SEQUENCE [GENOMIC DNA]</scope>
</reference>
<reference key="2">
    <citation type="journal article" date="1996" name="Nucleic Acids Res.">
        <title>The complete nucleotide sequence of bacteriophage HP1 DNA.</title>
        <authorList>
            <person name="Esposito D."/>
            <person name="Fitzmaurice W.P."/>
            <person name="Benjamin R.C."/>
            <person name="Goodman S.D."/>
            <person name="Waldman A.S."/>
            <person name="Scocca J.J."/>
        </authorList>
    </citation>
    <scope>NUCLEOTIDE SEQUENCE [LARGE SCALE GENOMIC DNA]</scope>
</reference>
<organismHost>
    <name type="scientific">Haemophilus influenzae</name>
    <dbReference type="NCBI Taxonomy" id="727"/>
</organismHost>
<name>YO22_BPHC1</name>
<proteinExistence type="predicted"/>
<keyword id="KW-1185">Reference proteome</keyword>
<dbReference type="EMBL" id="U24159">
    <property type="protein sequence ID" value="AAB09207.1"/>
    <property type="molecule type" value="Genomic_DNA"/>
</dbReference>
<dbReference type="PIR" id="S69528">
    <property type="entry name" value="S69528"/>
</dbReference>
<dbReference type="RefSeq" id="NP_043491.1">
    <property type="nucleotide sequence ID" value="NC_001697.1"/>
</dbReference>
<dbReference type="SMR" id="P51724"/>
<dbReference type="GeneID" id="1261131"/>
<dbReference type="KEGG" id="vg:1261131"/>
<dbReference type="Proteomes" id="UP000001713">
    <property type="component" value="Segment"/>
</dbReference>
<protein>
    <recommendedName>
        <fullName>Uncharacterized 26.0 kDa protein in rep-hol intergenic region</fullName>
    </recommendedName>
    <alternativeName>
        <fullName>ORF22</fullName>
    </alternativeName>
</protein>
<organism>
    <name type="scientific">Haemophilus phage HP1 (strain HP1c1)</name>
    <name type="common">Bacteriophage HP1</name>
    <dbReference type="NCBI Taxonomy" id="1289570"/>
    <lineage>
        <taxon>Viruses</taxon>
        <taxon>Duplodnaviria</taxon>
        <taxon>Heunggongvirae</taxon>
        <taxon>Uroviricota</taxon>
        <taxon>Caudoviricetes</taxon>
        <taxon>Peduoviridae</taxon>
        <taxon>Hpunavirus</taxon>
        <taxon>Haemophilus phage HP1</taxon>
    </lineage>
</organism>